<evidence type="ECO:0000250" key="1"/>
<evidence type="ECO:0000250" key="2">
    <source>
        <dbReference type="UniProtKB" id="P0A7D1"/>
    </source>
</evidence>
<evidence type="ECO:0000255" key="3"/>
<evidence type="ECO:0000305" key="4"/>
<reference key="1">
    <citation type="journal article" date="2000" name="Nature">
        <title>Sequence and analysis of chromosome 1 of the plant Arabidopsis thaliana.</title>
        <authorList>
            <person name="Theologis A."/>
            <person name="Ecker J.R."/>
            <person name="Palm C.J."/>
            <person name="Federspiel N.A."/>
            <person name="Kaul S."/>
            <person name="White O."/>
            <person name="Alonso J."/>
            <person name="Altafi H."/>
            <person name="Araujo R."/>
            <person name="Bowman C.L."/>
            <person name="Brooks S.Y."/>
            <person name="Buehler E."/>
            <person name="Chan A."/>
            <person name="Chao Q."/>
            <person name="Chen H."/>
            <person name="Cheuk R.F."/>
            <person name="Chin C.W."/>
            <person name="Chung M.K."/>
            <person name="Conn L."/>
            <person name="Conway A.B."/>
            <person name="Conway A.R."/>
            <person name="Creasy T.H."/>
            <person name="Dewar K."/>
            <person name="Dunn P."/>
            <person name="Etgu P."/>
            <person name="Feldblyum T.V."/>
            <person name="Feng J.-D."/>
            <person name="Fong B."/>
            <person name="Fujii C.Y."/>
            <person name="Gill J.E."/>
            <person name="Goldsmith A.D."/>
            <person name="Haas B."/>
            <person name="Hansen N.F."/>
            <person name="Hughes B."/>
            <person name="Huizar L."/>
            <person name="Hunter J.L."/>
            <person name="Jenkins J."/>
            <person name="Johnson-Hopson C."/>
            <person name="Khan S."/>
            <person name="Khaykin E."/>
            <person name="Kim C.J."/>
            <person name="Koo H.L."/>
            <person name="Kremenetskaia I."/>
            <person name="Kurtz D.B."/>
            <person name="Kwan A."/>
            <person name="Lam B."/>
            <person name="Langin-Hooper S."/>
            <person name="Lee A."/>
            <person name="Lee J.M."/>
            <person name="Lenz C.A."/>
            <person name="Li J.H."/>
            <person name="Li Y.-P."/>
            <person name="Lin X."/>
            <person name="Liu S.X."/>
            <person name="Liu Z.A."/>
            <person name="Luros J.S."/>
            <person name="Maiti R."/>
            <person name="Marziali A."/>
            <person name="Militscher J."/>
            <person name="Miranda M."/>
            <person name="Nguyen M."/>
            <person name="Nierman W.C."/>
            <person name="Osborne B.I."/>
            <person name="Pai G."/>
            <person name="Peterson J."/>
            <person name="Pham P.K."/>
            <person name="Rizzo M."/>
            <person name="Rooney T."/>
            <person name="Rowley D."/>
            <person name="Sakano H."/>
            <person name="Salzberg S.L."/>
            <person name="Schwartz J.R."/>
            <person name="Shinn P."/>
            <person name="Southwick A.M."/>
            <person name="Sun H."/>
            <person name="Tallon L.J."/>
            <person name="Tambunga G."/>
            <person name="Toriumi M.J."/>
            <person name="Town C.D."/>
            <person name="Utterback T."/>
            <person name="Van Aken S."/>
            <person name="Vaysberg M."/>
            <person name="Vysotskaia V.S."/>
            <person name="Walker M."/>
            <person name="Wu D."/>
            <person name="Yu G."/>
            <person name="Fraser C.M."/>
            <person name="Venter J.C."/>
            <person name="Davis R.W."/>
        </authorList>
    </citation>
    <scope>NUCLEOTIDE SEQUENCE [LARGE SCALE GENOMIC DNA]</scope>
    <source>
        <strain>cv. Columbia</strain>
    </source>
</reference>
<reference key="2">
    <citation type="journal article" date="2017" name="Plant J.">
        <title>Araport11: a complete reannotation of the Arabidopsis thaliana reference genome.</title>
        <authorList>
            <person name="Cheng C.Y."/>
            <person name="Krishnakumar V."/>
            <person name="Chan A.P."/>
            <person name="Thibaud-Nissen F."/>
            <person name="Schobel S."/>
            <person name="Town C.D."/>
        </authorList>
    </citation>
    <scope>GENOME REANNOTATION</scope>
    <source>
        <strain>cv. Columbia</strain>
    </source>
</reference>
<reference key="3">
    <citation type="journal article" date="2002" name="Science">
        <title>Functional annotation of a full-length Arabidopsis cDNA collection.</title>
        <authorList>
            <person name="Seki M."/>
            <person name="Narusaka M."/>
            <person name="Kamiya A."/>
            <person name="Ishida J."/>
            <person name="Satou M."/>
            <person name="Sakurai T."/>
            <person name="Nakajima M."/>
            <person name="Enju A."/>
            <person name="Akiyama K."/>
            <person name="Oono Y."/>
            <person name="Muramatsu M."/>
            <person name="Hayashizaki Y."/>
            <person name="Kawai J."/>
            <person name="Carninci P."/>
            <person name="Itoh M."/>
            <person name="Ishii Y."/>
            <person name="Arakawa T."/>
            <person name="Shibata K."/>
            <person name="Shinagawa A."/>
            <person name="Shinozaki K."/>
        </authorList>
    </citation>
    <scope>NUCLEOTIDE SEQUENCE [LARGE SCALE MRNA]</scope>
    <source>
        <strain>cv. Columbia</strain>
    </source>
</reference>
<reference key="4">
    <citation type="journal article" date="2003" name="Science">
        <title>Empirical analysis of transcriptional activity in the Arabidopsis genome.</title>
        <authorList>
            <person name="Yamada K."/>
            <person name="Lim J."/>
            <person name="Dale J.M."/>
            <person name="Chen H."/>
            <person name="Shinn P."/>
            <person name="Palm C.J."/>
            <person name="Southwick A.M."/>
            <person name="Wu H.C."/>
            <person name="Kim C.J."/>
            <person name="Nguyen M."/>
            <person name="Pham P.K."/>
            <person name="Cheuk R.F."/>
            <person name="Karlin-Newmann G."/>
            <person name="Liu S.X."/>
            <person name="Lam B."/>
            <person name="Sakano H."/>
            <person name="Wu T."/>
            <person name="Yu G."/>
            <person name="Miranda M."/>
            <person name="Quach H.L."/>
            <person name="Tripp M."/>
            <person name="Chang C.H."/>
            <person name="Lee J.M."/>
            <person name="Toriumi M.J."/>
            <person name="Chan M.M."/>
            <person name="Tang C.C."/>
            <person name="Onodera C.S."/>
            <person name="Deng J.M."/>
            <person name="Akiyama K."/>
            <person name="Ansari Y."/>
            <person name="Arakawa T."/>
            <person name="Banh J."/>
            <person name="Banno F."/>
            <person name="Bowser L."/>
            <person name="Brooks S.Y."/>
            <person name="Carninci P."/>
            <person name="Chao Q."/>
            <person name="Choy N."/>
            <person name="Enju A."/>
            <person name="Goldsmith A.D."/>
            <person name="Gurjal M."/>
            <person name="Hansen N.F."/>
            <person name="Hayashizaki Y."/>
            <person name="Johnson-Hopson C."/>
            <person name="Hsuan V.W."/>
            <person name="Iida K."/>
            <person name="Karnes M."/>
            <person name="Khan S."/>
            <person name="Koesema E."/>
            <person name="Ishida J."/>
            <person name="Jiang P.X."/>
            <person name="Jones T."/>
            <person name="Kawai J."/>
            <person name="Kamiya A."/>
            <person name="Meyers C."/>
            <person name="Nakajima M."/>
            <person name="Narusaka M."/>
            <person name="Seki M."/>
            <person name="Sakurai T."/>
            <person name="Satou M."/>
            <person name="Tamse R."/>
            <person name="Vaysberg M."/>
            <person name="Wallender E.K."/>
            <person name="Wong C."/>
            <person name="Yamamura Y."/>
            <person name="Yuan S."/>
            <person name="Shinozaki K."/>
            <person name="Davis R.W."/>
            <person name="Theologis A."/>
            <person name="Ecker J.R."/>
        </authorList>
    </citation>
    <scope>NUCLEOTIDE SEQUENCE [LARGE SCALE MRNA]</scope>
    <source>
        <strain>cv. Columbia</strain>
    </source>
</reference>
<protein>
    <recommendedName>
        <fullName>Peptidyl-tRNA hydrolase, chloroplastic</fullName>
        <ecNumber>3.1.1.29</ecNumber>
    </recommendedName>
    <alternativeName>
        <fullName>C-PTH</fullName>
    </alternativeName>
</protein>
<proteinExistence type="evidence at transcript level"/>
<feature type="transit peptide" description="Chloroplast" evidence="3">
    <location>
        <begin position="1"/>
        <end position="55"/>
    </location>
</feature>
<feature type="chain" id="PRO_0000280527" description="Peptidyl-tRNA hydrolase, chloroplastic">
    <location>
        <begin position="56"/>
        <end position="288"/>
    </location>
</feature>
<feature type="active site" description="Proton acceptor" evidence="2">
    <location>
        <position position="112"/>
    </location>
</feature>
<feature type="binding site" evidence="2">
    <location>
        <position position="107"/>
    </location>
    <ligand>
        <name>tRNA</name>
        <dbReference type="ChEBI" id="CHEBI:17843"/>
    </ligand>
</feature>
<feature type="binding site" evidence="2">
    <location>
        <position position="157"/>
    </location>
    <ligand>
        <name>tRNA</name>
        <dbReference type="ChEBI" id="CHEBI:17843"/>
    </ligand>
</feature>
<feature type="binding site" evidence="2">
    <location>
        <position position="159"/>
    </location>
    <ligand>
        <name>tRNA</name>
        <dbReference type="ChEBI" id="CHEBI:17843"/>
    </ligand>
</feature>
<feature type="binding site" evidence="2">
    <location>
        <position position="205"/>
    </location>
    <ligand>
        <name>tRNA</name>
        <dbReference type="ChEBI" id="CHEBI:17843"/>
    </ligand>
</feature>
<feature type="site" description="Stabilizes the basic form of H active site to accept a proton" evidence="2">
    <location>
        <position position="184"/>
    </location>
</feature>
<feature type="sequence conflict" description="In Ref. 3; BAC43630 and 4; AAO63348." evidence="4" ref="3 4">
    <original>N</original>
    <variation>D</variation>
    <location>
        <position position="159"/>
    </location>
</feature>
<accession>Q8GW64</accession>
<accession>Q9LPQ9</accession>
<comment type="function">
    <text evidence="1">The natural substrate for this enzyme may be peptidyl-tRNAs which drop off the ribosome during protein synthesis.</text>
</comment>
<comment type="catalytic activity">
    <reaction>
        <text>an N-acyl-L-alpha-aminoacyl-tRNA + H2O = an N-acyl-L-amino acid + a tRNA + H(+)</text>
        <dbReference type="Rhea" id="RHEA:54448"/>
        <dbReference type="Rhea" id="RHEA-COMP:10123"/>
        <dbReference type="Rhea" id="RHEA-COMP:13883"/>
        <dbReference type="ChEBI" id="CHEBI:15377"/>
        <dbReference type="ChEBI" id="CHEBI:15378"/>
        <dbReference type="ChEBI" id="CHEBI:59874"/>
        <dbReference type="ChEBI" id="CHEBI:78442"/>
        <dbReference type="ChEBI" id="CHEBI:138191"/>
        <dbReference type="EC" id="3.1.1.29"/>
    </reaction>
</comment>
<comment type="subunit">
    <text evidence="1">Monomer.</text>
</comment>
<comment type="subcellular location">
    <subcellularLocation>
        <location evidence="1">Plastid</location>
        <location evidence="1">Chloroplast stroma</location>
    </subcellularLocation>
</comment>
<comment type="similarity">
    <text evidence="4">Belongs to the PTH family.</text>
</comment>
<comment type="sequence caution" evidence="4">
    <conflict type="erroneous gene model prediction">
        <sequence resource="EMBL-CDS" id="AAF25998"/>
    </conflict>
    <text>The predicted gene has been split into 2 genes: At1g18440 and At1g18450.</text>
</comment>
<name>PTHC_ARATH</name>
<sequence length="288" mass="31562">MKAVAFPAKIANLSFPSNCCSLFFRSPATFLSPALPCRKLTKGIRGLEGLMSQCLSSSSQSLSFSSNSFSSQPESELLQALPSSKPKSPPLQLPWLIVGLGNPGKKYQGTRHNVGFEMVDALADAEGISMNTVNFKALFGKGVIGNIPIMLAKPQTFMNLSGESVGQIVSFYKIPLKQVLVVYDDLDLPFGKLRLLPKGGHGGHNGMRSIIDRLKGSRDFPRLRIGIGRPPGKMDTANFVLRQFNRQEQEELDHTFQTGLEAIRILLLEGFNKSATFVNTRKSMEQLS</sequence>
<keyword id="KW-0150">Chloroplast</keyword>
<keyword id="KW-0378">Hydrolase</keyword>
<keyword id="KW-0934">Plastid</keyword>
<keyword id="KW-1185">Reference proteome</keyword>
<keyword id="KW-0694">RNA-binding</keyword>
<keyword id="KW-0809">Transit peptide</keyword>
<keyword id="KW-0820">tRNA-binding</keyword>
<gene>
    <name type="ordered locus">At1g18440</name>
    <name type="ORF">F15H18.24</name>
</gene>
<dbReference type="EC" id="3.1.1.29"/>
<dbReference type="EMBL" id="AC013354">
    <property type="protein sequence ID" value="AAF25998.1"/>
    <property type="status" value="ALT_SEQ"/>
    <property type="molecule type" value="Genomic_DNA"/>
</dbReference>
<dbReference type="EMBL" id="CP002684">
    <property type="protein sequence ID" value="AEE29714.1"/>
    <property type="molecule type" value="Genomic_DNA"/>
</dbReference>
<dbReference type="EMBL" id="AK119054">
    <property type="protein sequence ID" value="BAC43630.1"/>
    <property type="molecule type" value="mRNA"/>
</dbReference>
<dbReference type="EMBL" id="BT005284">
    <property type="protein sequence ID" value="AAO63348.1"/>
    <property type="molecule type" value="mRNA"/>
</dbReference>
<dbReference type="PIR" id="C86318">
    <property type="entry name" value="C86318"/>
</dbReference>
<dbReference type="RefSeq" id="NP_173279.2">
    <property type="nucleotide sequence ID" value="NM_101701.4"/>
</dbReference>
<dbReference type="SMR" id="Q8GW64"/>
<dbReference type="BioGRID" id="23663">
    <property type="interactions" value="1"/>
</dbReference>
<dbReference type="FunCoup" id="Q8GW64">
    <property type="interactions" value="877"/>
</dbReference>
<dbReference type="STRING" id="3702.Q8GW64"/>
<dbReference type="PaxDb" id="3702-AT1G18440.1"/>
<dbReference type="ProteomicsDB" id="248807"/>
<dbReference type="EnsemblPlants" id="AT1G18440.1">
    <property type="protein sequence ID" value="AT1G18440.1"/>
    <property type="gene ID" value="AT1G18440"/>
</dbReference>
<dbReference type="GeneID" id="838424"/>
<dbReference type="Gramene" id="AT1G18440.1">
    <property type="protein sequence ID" value="AT1G18440.1"/>
    <property type="gene ID" value="AT1G18440"/>
</dbReference>
<dbReference type="KEGG" id="ath:AT1G18440"/>
<dbReference type="Araport" id="AT1G18440"/>
<dbReference type="TAIR" id="AT1G18440"/>
<dbReference type="eggNOG" id="KOG2255">
    <property type="taxonomic scope" value="Eukaryota"/>
</dbReference>
<dbReference type="HOGENOM" id="CLU_062456_5_0_1"/>
<dbReference type="InParanoid" id="Q8GW64"/>
<dbReference type="OMA" id="HDELQVP"/>
<dbReference type="PhylomeDB" id="Q8GW64"/>
<dbReference type="PRO" id="PR:Q8GW64"/>
<dbReference type="Proteomes" id="UP000006548">
    <property type="component" value="Chromosome 1"/>
</dbReference>
<dbReference type="ExpressionAtlas" id="Q8GW64">
    <property type="expression patterns" value="baseline and differential"/>
</dbReference>
<dbReference type="GO" id="GO:0009507">
    <property type="term" value="C:chloroplast"/>
    <property type="evidence" value="ECO:0007005"/>
    <property type="project" value="TAIR"/>
</dbReference>
<dbReference type="GO" id="GO:0009570">
    <property type="term" value="C:chloroplast stroma"/>
    <property type="evidence" value="ECO:0007669"/>
    <property type="project" value="UniProtKB-SubCell"/>
</dbReference>
<dbReference type="GO" id="GO:0004045">
    <property type="term" value="F:peptidyl-tRNA hydrolase activity"/>
    <property type="evidence" value="ECO:0007669"/>
    <property type="project" value="UniProtKB-EC"/>
</dbReference>
<dbReference type="GO" id="GO:0000049">
    <property type="term" value="F:tRNA binding"/>
    <property type="evidence" value="ECO:0007669"/>
    <property type="project" value="UniProtKB-KW"/>
</dbReference>
<dbReference type="CDD" id="cd02406">
    <property type="entry name" value="CRS2"/>
    <property type="match status" value="1"/>
</dbReference>
<dbReference type="FunFam" id="3.40.50.1470:FF:000001">
    <property type="entry name" value="Peptidyl-tRNA hydrolase"/>
    <property type="match status" value="1"/>
</dbReference>
<dbReference type="Gene3D" id="3.40.50.1470">
    <property type="entry name" value="Peptidyl-tRNA hydrolase"/>
    <property type="match status" value="1"/>
</dbReference>
<dbReference type="HAMAP" id="MF_00083">
    <property type="entry name" value="Pept_tRNA_hydro_bact"/>
    <property type="match status" value="1"/>
</dbReference>
<dbReference type="InterPro" id="IPR048076">
    <property type="entry name" value="CRS2-like"/>
</dbReference>
<dbReference type="InterPro" id="IPR001328">
    <property type="entry name" value="Pept_tRNA_hydro"/>
</dbReference>
<dbReference type="InterPro" id="IPR018171">
    <property type="entry name" value="Pept_tRNA_hydro_CS"/>
</dbReference>
<dbReference type="InterPro" id="IPR036416">
    <property type="entry name" value="Pept_tRNA_hydro_sf"/>
</dbReference>
<dbReference type="NCBIfam" id="TIGR00447">
    <property type="entry name" value="pth"/>
    <property type="match status" value="1"/>
</dbReference>
<dbReference type="PANTHER" id="PTHR17224">
    <property type="entry name" value="PEPTIDYL-TRNA HYDROLASE"/>
    <property type="match status" value="1"/>
</dbReference>
<dbReference type="PANTHER" id="PTHR17224:SF1">
    <property type="entry name" value="PEPTIDYL-TRNA HYDROLASE"/>
    <property type="match status" value="1"/>
</dbReference>
<dbReference type="Pfam" id="PF01195">
    <property type="entry name" value="Pept_tRNA_hydro"/>
    <property type="match status" value="1"/>
</dbReference>
<dbReference type="SUPFAM" id="SSF53178">
    <property type="entry name" value="Peptidyl-tRNA hydrolase-like"/>
    <property type="match status" value="1"/>
</dbReference>
<dbReference type="PROSITE" id="PS01195">
    <property type="entry name" value="PEPT_TRNA_HYDROL_1"/>
    <property type="match status" value="1"/>
</dbReference>
<dbReference type="PROSITE" id="PS01196">
    <property type="entry name" value="PEPT_TRNA_HYDROL_2"/>
    <property type="match status" value="1"/>
</dbReference>
<organism>
    <name type="scientific">Arabidopsis thaliana</name>
    <name type="common">Mouse-ear cress</name>
    <dbReference type="NCBI Taxonomy" id="3702"/>
    <lineage>
        <taxon>Eukaryota</taxon>
        <taxon>Viridiplantae</taxon>
        <taxon>Streptophyta</taxon>
        <taxon>Embryophyta</taxon>
        <taxon>Tracheophyta</taxon>
        <taxon>Spermatophyta</taxon>
        <taxon>Magnoliopsida</taxon>
        <taxon>eudicotyledons</taxon>
        <taxon>Gunneridae</taxon>
        <taxon>Pentapetalae</taxon>
        <taxon>rosids</taxon>
        <taxon>malvids</taxon>
        <taxon>Brassicales</taxon>
        <taxon>Brassicaceae</taxon>
        <taxon>Camelineae</taxon>
        <taxon>Arabidopsis</taxon>
    </lineage>
</organism>